<sequence>MKDHSFYHFALTARGRKDEKGELAEEIFDDLSFPKHEKDFHILSDYIETQGHYTISLSVFDDLYEEYTEWLKF</sequence>
<name>Y1318_STAS1</name>
<protein>
    <recommendedName>
        <fullName evidence="1">UPF0346 protein SSP1318</fullName>
    </recommendedName>
</protein>
<reference key="1">
    <citation type="journal article" date="2005" name="Proc. Natl. Acad. Sci. U.S.A.">
        <title>Whole genome sequence of Staphylococcus saprophyticus reveals the pathogenesis of uncomplicated urinary tract infection.</title>
        <authorList>
            <person name="Kuroda M."/>
            <person name="Yamashita A."/>
            <person name="Hirakawa H."/>
            <person name="Kumano M."/>
            <person name="Morikawa K."/>
            <person name="Higashide M."/>
            <person name="Maruyama A."/>
            <person name="Inose Y."/>
            <person name="Matoba K."/>
            <person name="Toh H."/>
            <person name="Kuhara S."/>
            <person name="Hattori M."/>
            <person name="Ohta T."/>
        </authorList>
    </citation>
    <scope>NUCLEOTIDE SEQUENCE [LARGE SCALE GENOMIC DNA]</scope>
    <source>
        <strain>ATCC 15305 / DSM 20229 / NCIMB 8711 / NCTC 7292 / S-41</strain>
    </source>
</reference>
<dbReference type="EMBL" id="AP008934">
    <property type="protein sequence ID" value="BAE18463.1"/>
    <property type="molecule type" value="Genomic_DNA"/>
</dbReference>
<dbReference type="RefSeq" id="WP_002483292.1">
    <property type="nucleotide sequence ID" value="NZ_MTGA01000038.1"/>
</dbReference>
<dbReference type="SMR" id="Q49XN2"/>
<dbReference type="KEGG" id="ssp:SSP1318"/>
<dbReference type="eggNOG" id="COG4479">
    <property type="taxonomic scope" value="Bacteria"/>
</dbReference>
<dbReference type="HOGENOM" id="CLU_177534_1_0_9"/>
<dbReference type="OrthoDB" id="2242851at2"/>
<dbReference type="Proteomes" id="UP000006371">
    <property type="component" value="Chromosome"/>
</dbReference>
<dbReference type="Gene3D" id="1.10.150.260">
    <property type="entry name" value="YozE SAM-like"/>
    <property type="match status" value="1"/>
</dbReference>
<dbReference type="HAMAP" id="MF_01538">
    <property type="entry name" value="UPF0346"/>
    <property type="match status" value="1"/>
</dbReference>
<dbReference type="InterPro" id="IPR010673">
    <property type="entry name" value="UPF0346"/>
</dbReference>
<dbReference type="InterPro" id="IPR023089">
    <property type="entry name" value="YozE_SAM-like"/>
</dbReference>
<dbReference type="InterPro" id="IPR036806">
    <property type="entry name" value="YozE_SAM-like_sf"/>
</dbReference>
<dbReference type="NCBIfam" id="NF010193">
    <property type="entry name" value="PRK13672.1"/>
    <property type="match status" value="1"/>
</dbReference>
<dbReference type="Pfam" id="PF06855">
    <property type="entry name" value="YozE_SAM_like"/>
    <property type="match status" value="1"/>
</dbReference>
<dbReference type="PIRSF" id="PIRSF037262">
    <property type="entry name" value="UCP037262"/>
    <property type="match status" value="1"/>
</dbReference>
<dbReference type="SUPFAM" id="SSF140652">
    <property type="entry name" value="YozE-like"/>
    <property type="match status" value="1"/>
</dbReference>
<feature type="chain" id="PRO_0000298752" description="UPF0346 protein SSP1318">
    <location>
        <begin position="1"/>
        <end position="73"/>
    </location>
</feature>
<gene>
    <name type="ordered locus">SSP1318</name>
</gene>
<organism>
    <name type="scientific">Staphylococcus saprophyticus subsp. saprophyticus (strain ATCC 15305 / DSM 20229 / NCIMB 8711 / NCTC 7292 / S-41)</name>
    <dbReference type="NCBI Taxonomy" id="342451"/>
    <lineage>
        <taxon>Bacteria</taxon>
        <taxon>Bacillati</taxon>
        <taxon>Bacillota</taxon>
        <taxon>Bacilli</taxon>
        <taxon>Bacillales</taxon>
        <taxon>Staphylococcaceae</taxon>
        <taxon>Staphylococcus</taxon>
    </lineage>
</organism>
<comment type="similarity">
    <text evidence="1">Belongs to the UPF0346 family.</text>
</comment>
<proteinExistence type="inferred from homology"/>
<evidence type="ECO:0000255" key="1">
    <source>
        <dbReference type="HAMAP-Rule" id="MF_01538"/>
    </source>
</evidence>
<accession>Q49XN2</accession>
<keyword id="KW-1185">Reference proteome</keyword>